<organism>
    <name type="scientific">Phenylobacterium zucineum (strain HLK1)</name>
    <dbReference type="NCBI Taxonomy" id="450851"/>
    <lineage>
        <taxon>Bacteria</taxon>
        <taxon>Pseudomonadati</taxon>
        <taxon>Pseudomonadota</taxon>
        <taxon>Alphaproteobacteria</taxon>
        <taxon>Caulobacterales</taxon>
        <taxon>Caulobacteraceae</taxon>
        <taxon>Phenylobacterium</taxon>
    </lineage>
</organism>
<comment type="function">
    <text evidence="1">Catalyzes the decarboxylative condensation of pimeloyl-[acyl-carrier protein] and L-alanine to produce 8-amino-7-oxononanoate (AON), [acyl-carrier protein], and carbon dioxide.</text>
</comment>
<comment type="catalytic activity">
    <reaction>
        <text>6-carboxyhexanoyl-[ACP] + L-alanine + H(+) = (8S)-8-amino-7-oxononanoate + holo-[ACP] + CO2</text>
        <dbReference type="Rhea" id="RHEA:42288"/>
        <dbReference type="Rhea" id="RHEA-COMP:9685"/>
        <dbReference type="Rhea" id="RHEA-COMP:9955"/>
        <dbReference type="ChEBI" id="CHEBI:15378"/>
        <dbReference type="ChEBI" id="CHEBI:16526"/>
        <dbReference type="ChEBI" id="CHEBI:57972"/>
        <dbReference type="ChEBI" id="CHEBI:64479"/>
        <dbReference type="ChEBI" id="CHEBI:78846"/>
        <dbReference type="ChEBI" id="CHEBI:149468"/>
        <dbReference type="EC" id="2.3.1.47"/>
    </reaction>
</comment>
<comment type="cofactor">
    <cofactor evidence="1">
        <name>pyridoxal 5'-phosphate</name>
        <dbReference type="ChEBI" id="CHEBI:597326"/>
    </cofactor>
</comment>
<comment type="pathway">
    <text>Cofactor biosynthesis; biotin biosynthesis.</text>
</comment>
<comment type="subunit">
    <text evidence="1">Homodimer.</text>
</comment>
<comment type="similarity">
    <text evidence="2">Belongs to the class-II pyridoxal-phosphate-dependent aminotransferase family. BioF subfamily.</text>
</comment>
<reference key="1">
    <citation type="journal article" date="2008" name="BMC Genomics">
        <title>Complete genome of Phenylobacterium zucineum - a novel facultative intracellular bacterium isolated from human erythroleukemia cell line K562.</title>
        <authorList>
            <person name="Luo Y."/>
            <person name="Xu X."/>
            <person name="Ding Z."/>
            <person name="Liu Z."/>
            <person name="Zhang B."/>
            <person name="Yan Z."/>
            <person name="Sun J."/>
            <person name="Hu S."/>
            <person name="Hu X."/>
        </authorList>
    </citation>
    <scope>NUCLEOTIDE SEQUENCE [LARGE SCALE GENOMIC DNA]</scope>
    <source>
        <strain>HLK1</strain>
    </source>
</reference>
<name>BIOF_PHEZH</name>
<protein>
    <recommendedName>
        <fullName>Putative 8-amino-7-oxononanoate synthase</fullName>
        <shortName>AONS</shortName>
        <ecNumber>2.3.1.47</ecNumber>
    </recommendedName>
    <alternativeName>
        <fullName>7-keto-8-amino-pelargonic acid synthase</fullName>
        <shortName>7-KAP synthase</shortName>
    </alternativeName>
    <alternativeName>
        <fullName>8-amino-7-ketopelargonate synthase</fullName>
    </alternativeName>
</protein>
<keyword id="KW-0093">Biotin biosynthesis</keyword>
<keyword id="KW-0663">Pyridoxal phosphate</keyword>
<keyword id="KW-1185">Reference proteome</keyword>
<keyword id="KW-0808">Transferase</keyword>
<accession>B4RFX5</accession>
<sequence>MPAPMDSLAAFATDKLAALESQSLRRRLRPTRRTDGVCVERGGRRLVSFSCNDYLGLSHHPAVKAAAAAAIESEGLGAGASRLVTGDNPLLATLERRLAALKGAEAACVFGSGYLANLGIIPTFMGAGDIVLVDELAHACIWGGARLSGAQVISFRHNDVDDLTGKLAAARGSARRALVATDGVFSMDGDIAPLDDISRTAQAWDAWLLVDDAHGLGVVGGGVGVGALFPSARIDLSMGTLSKALGAYGAYVCAAQPVIDLIKSRTRTVVYTTALPPAVAAGALAALDIIITEPKRVAAPRLRARRLTRSLGLPTAESAIVPIVLGDAETALAAAADLERQGLLAVAIRPPTVPANTARLRIACSALHTESQIDDLAAALQPWMQA</sequence>
<proteinExistence type="inferred from homology"/>
<gene>
    <name type="primary">bioF</name>
    <name type="ordered locus">PHZ_c2379</name>
</gene>
<evidence type="ECO:0000250" key="1"/>
<evidence type="ECO:0000305" key="2"/>
<dbReference type="EC" id="2.3.1.47"/>
<dbReference type="EMBL" id="CP000747">
    <property type="protein sequence ID" value="ACG78788.1"/>
    <property type="molecule type" value="Genomic_DNA"/>
</dbReference>
<dbReference type="SMR" id="B4RFX5"/>
<dbReference type="STRING" id="450851.PHZ_c2379"/>
<dbReference type="KEGG" id="pzu:PHZ_c2379"/>
<dbReference type="eggNOG" id="COG0156">
    <property type="taxonomic scope" value="Bacteria"/>
</dbReference>
<dbReference type="HOGENOM" id="CLU_015846_11_2_5"/>
<dbReference type="OrthoDB" id="9807157at2"/>
<dbReference type="UniPathway" id="UPA00078"/>
<dbReference type="Proteomes" id="UP000001868">
    <property type="component" value="Chromosome"/>
</dbReference>
<dbReference type="GO" id="GO:0008710">
    <property type="term" value="F:8-amino-7-oxononanoate synthase activity"/>
    <property type="evidence" value="ECO:0007669"/>
    <property type="project" value="UniProtKB-EC"/>
</dbReference>
<dbReference type="GO" id="GO:0030170">
    <property type="term" value="F:pyridoxal phosphate binding"/>
    <property type="evidence" value="ECO:0007669"/>
    <property type="project" value="InterPro"/>
</dbReference>
<dbReference type="GO" id="GO:0009102">
    <property type="term" value="P:biotin biosynthetic process"/>
    <property type="evidence" value="ECO:0007669"/>
    <property type="project" value="UniProtKB-UniPathway"/>
</dbReference>
<dbReference type="Gene3D" id="3.90.1150.10">
    <property type="entry name" value="Aspartate Aminotransferase, domain 1"/>
    <property type="match status" value="1"/>
</dbReference>
<dbReference type="Gene3D" id="3.40.640.10">
    <property type="entry name" value="Type I PLP-dependent aspartate aminotransferase-like (Major domain)"/>
    <property type="match status" value="1"/>
</dbReference>
<dbReference type="InterPro" id="IPR001917">
    <property type="entry name" value="Aminotrans_II_pyridoxalP_BS"/>
</dbReference>
<dbReference type="InterPro" id="IPR004839">
    <property type="entry name" value="Aminotransferase_I/II_large"/>
</dbReference>
<dbReference type="InterPro" id="IPR050087">
    <property type="entry name" value="AON_synthase_class-II"/>
</dbReference>
<dbReference type="InterPro" id="IPR004723">
    <property type="entry name" value="AONS_Archaea/Proteobacteria"/>
</dbReference>
<dbReference type="InterPro" id="IPR015424">
    <property type="entry name" value="PyrdxlP-dep_Trfase"/>
</dbReference>
<dbReference type="InterPro" id="IPR015421">
    <property type="entry name" value="PyrdxlP-dep_Trfase_major"/>
</dbReference>
<dbReference type="InterPro" id="IPR015422">
    <property type="entry name" value="PyrdxlP-dep_Trfase_small"/>
</dbReference>
<dbReference type="NCBIfam" id="TIGR00858">
    <property type="entry name" value="bioF"/>
    <property type="match status" value="1"/>
</dbReference>
<dbReference type="PANTHER" id="PTHR13693:SF100">
    <property type="entry name" value="8-AMINO-7-OXONONANOATE SYNTHASE"/>
    <property type="match status" value="1"/>
</dbReference>
<dbReference type="PANTHER" id="PTHR13693">
    <property type="entry name" value="CLASS II AMINOTRANSFERASE/8-AMINO-7-OXONONANOATE SYNTHASE"/>
    <property type="match status" value="1"/>
</dbReference>
<dbReference type="Pfam" id="PF00155">
    <property type="entry name" value="Aminotran_1_2"/>
    <property type="match status" value="1"/>
</dbReference>
<dbReference type="SUPFAM" id="SSF53383">
    <property type="entry name" value="PLP-dependent transferases"/>
    <property type="match status" value="1"/>
</dbReference>
<dbReference type="PROSITE" id="PS00599">
    <property type="entry name" value="AA_TRANSFER_CLASS_2"/>
    <property type="match status" value="1"/>
</dbReference>
<feature type="chain" id="PRO_0000381064" description="Putative 8-amino-7-oxononanoate synthase">
    <location>
        <begin position="1"/>
        <end position="386"/>
    </location>
</feature>
<feature type="binding site" evidence="1">
    <location>
        <position position="26"/>
    </location>
    <ligand>
        <name>substrate</name>
    </ligand>
</feature>
<feature type="binding site" evidence="1">
    <location>
        <begin position="113"/>
        <end position="114"/>
    </location>
    <ligand>
        <name>pyridoxal 5'-phosphate</name>
        <dbReference type="ChEBI" id="CHEBI:597326"/>
    </ligand>
</feature>
<feature type="binding site" evidence="1">
    <location>
        <position position="138"/>
    </location>
    <ligand>
        <name>substrate</name>
    </ligand>
</feature>
<feature type="binding site" evidence="1">
    <location>
        <position position="186"/>
    </location>
    <ligand>
        <name>pyridoxal 5'-phosphate</name>
        <dbReference type="ChEBI" id="CHEBI:597326"/>
    </ligand>
</feature>
<feature type="binding site" evidence="1">
    <location>
        <begin position="211"/>
        <end position="214"/>
    </location>
    <ligand>
        <name>pyridoxal 5'-phosphate</name>
        <dbReference type="ChEBI" id="CHEBI:597326"/>
    </ligand>
</feature>
<feature type="binding site" evidence="1">
    <location>
        <begin position="240"/>
        <end position="243"/>
    </location>
    <ligand>
        <name>pyridoxal 5'-phosphate</name>
        <dbReference type="ChEBI" id="CHEBI:597326"/>
    </ligand>
</feature>
<feature type="binding site" evidence="1">
    <location>
        <position position="352"/>
    </location>
    <ligand>
        <name>substrate</name>
    </ligand>
</feature>
<feature type="modified residue" description="N6-(pyridoxal phosphate)lysine" evidence="1">
    <location>
        <position position="243"/>
    </location>
</feature>